<feature type="chain" id="PRO_0000169655" description="Uncharacterized protein YigF">
    <location>
        <begin position="1"/>
        <end position="126"/>
    </location>
</feature>
<dbReference type="EMBL" id="AL513382">
    <property type="protein sequence ID" value="CAD07939.1"/>
    <property type="molecule type" value="Genomic_DNA"/>
</dbReference>
<dbReference type="EMBL" id="AE014613">
    <property type="protein sequence ID" value="AAO70872.1"/>
    <property type="molecule type" value="Genomic_DNA"/>
</dbReference>
<dbReference type="RefSeq" id="NP_457798.1">
    <property type="nucleotide sequence ID" value="NC_003198.1"/>
</dbReference>
<dbReference type="RefSeq" id="WP_000356594.1">
    <property type="nucleotide sequence ID" value="NZ_WSUR01000033.1"/>
</dbReference>
<dbReference type="STRING" id="220341.gene:17587458"/>
<dbReference type="KEGG" id="stt:t3344"/>
<dbReference type="KEGG" id="sty:STY3606"/>
<dbReference type="PATRIC" id="fig|220341.7.peg.3675"/>
<dbReference type="eggNOG" id="ENOG5031C50">
    <property type="taxonomic scope" value="Bacteria"/>
</dbReference>
<dbReference type="HOGENOM" id="CLU_137392_0_0_6"/>
<dbReference type="OMA" id="ETYGAPN"/>
<dbReference type="OrthoDB" id="4727912at2"/>
<dbReference type="Proteomes" id="UP000000541">
    <property type="component" value="Chromosome"/>
</dbReference>
<dbReference type="Proteomes" id="UP000002670">
    <property type="component" value="Chromosome"/>
</dbReference>
<dbReference type="InterPro" id="IPR024399">
    <property type="entry name" value="DUF2628"/>
</dbReference>
<dbReference type="Pfam" id="PF10947">
    <property type="entry name" value="DUF2628"/>
    <property type="match status" value="1"/>
</dbReference>
<name>YIGF_SALTI</name>
<sequence>MDKDYINDGSLSEKWKYRFSFYDQHGFPGFWKVSPEYKQAFKALKPRQRLTIQINFIAFFFSWIYLFVLGLWKKAIIVILLGIVAIFIGALIGVNILGLVVAAYVGVNTNKWFYEKEVKGINTWSL</sequence>
<accession>P0A1T9</accession>
<accession>P31139</accession>
<protein>
    <recommendedName>
        <fullName>Uncharacterized protein YigF</fullName>
    </recommendedName>
</protein>
<proteinExistence type="predicted"/>
<organism>
    <name type="scientific">Salmonella typhi</name>
    <dbReference type="NCBI Taxonomy" id="90370"/>
    <lineage>
        <taxon>Bacteria</taxon>
        <taxon>Pseudomonadati</taxon>
        <taxon>Pseudomonadota</taxon>
        <taxon>Gammaproteobacteria</taxon>
        <taxon>Enterobacterales</taxon>
        <taxon>Enterobacteriaceae</taxon>
        <taxon>Salmonella</taxon>
    </lineage>
</organism>
<reference key="1">
    <citation type="journal article" date="2001" name="Nature">
        <title>Complete genome sequence of a multiple drug resistant Salmonella enterica serovar Typhi CT18.</title>
        <authorList>
            <person name="Parkhill J."/>
            <person name="Dougan G."/>
            <person name="James K.D."/>
            <person name="Thomson N.R."/>
            <person name="Pickard D."/>
            <person name="Wain J."/>
            <person name="Churcher C.M."/>
            <person name="Mungall K.L."/>
            <person name="Bentley S.D."/>
            <person name="Holden M.T.G."/>
            <person name="Sebaihia M."/>
            <person name="Baker S."/>
            <person name="Basham D."/>
            <person name="Brooks K."/>
            <person name="Chillingworth T."/>
            <person name="Connerton P."/>
            <person name="Cronin A."/>
            <person name="Davis P."/>
            <person name="Davies R.M."/>
            <person name="Dowd L."/>
            <person name="White N."/>
            <person name="Farrar J."/>
            <person name="Feltwell T."/>
            <person name="Hamlin N."/>
            <person name="Haque A."/>
            <person name="Hien T.T."/>
            <person name="Holroyd S."/>
            <person name="Jagels K."/>
            <person name="Krogh A."/>
            <person name="Larsen T.S."/>
            <person name="Leather S."/>
            <person name="Moule S."/>
            <person name="O'Gaora P."/>
            <person name="Parry C."/>
            <person name="Quail M.A."/>
            <person name="Rutherford K.M."/>
            <person name="Simmonds M."/>
            <person name="Skelton J."/>
            <person name="Stevens K."/>
            <person name="Whitehead S."/>
            <person name="Barrell B.G."/>
        </authorList>
    </citation>
    <scope>NUCLEOTIDE SEQUENCE [LARGE SCALE GENOMIC DNA]</scope>
    <source>
        <strain>CT18</strain>
    </source>
</reference>
<reference key="2">
    <citation type="journal article" date="2003" name="J. Bacteriol.">
        <title>Comparative genomics of Salmonella enterica serovar Typhi strains Ty2 and CT18.</title>
        <authorList>
            <person name="Deng W."/>
            <person name="Liou S.-R."/>
            <person name="Plunkett G. III"/>
            <person name="Mayhew G.F."/>
            <person name="Rose D.J."/>
            <person name="Burland V."/>
            <person name="Kodoyianni V."/>
            <person name="Schwartz D.C."/>
            <person name="Blattner F.R."/>
        </authorList>
    </citation>
    <scope>NUCLEOTIDE SEQUENCE [LARGE SCALE GENOMIC DNA]</scope>
    <source>
        <strain>ATCC 700931 / Ty2</strain>
    </source>
</reference>
<gene>
    <name type="primary">yigF</name>
    <name type="ordered locus">STY3606</name>
    <name type="ordered locus">t3344</name>
</gene>